<keyword id="KW-0002">3D-structure</keyword>
<keyword id="KW-1283">Bacterial microcompartment</keyword>
<keyword id="KW-1185">Reference proteome</keyword>
<protein>
    <recommendedName>
        <fullName evidence="7">Bacterial microcompartment shell protein EutM</fullName>
    </recommendedName>
    <alternativeName>
        <fullName evidence="6">Bacterial microcompartment protein homohexamer</fullName>
        <shortName evidence="6">BMC-H</shortName>
    </alternativeName>
    <alternativeName>
        <fullName>Ethanolamine utilization protein EutM</fullName>
    </alternativeName>
</protein>
<proteinExistence type="evidence at protein level"/>
<comment type="function">
    <text evidence="7">A component of the bacterial microcompartment (BMC) shell dedicated to ethanolamine degradation. Each homohexamer has a central pore with an opening of up to 9.0 Angstroms. Expression of the eut operon may allow this bacteria to use ethanolamine as a carbon, nitrogen and energy source. The pore probably allows metabolite passage into and out of the BMC.</text>
</comment>
<comment type="pathway">
    <text evidence="7">Amine and polyamine degradation; ethanolamine degradation.</text>
</comment>
<comment type="subunit">
    <text evidence="1 3">Homohexamer; has a positively charged pore 9 Angstroms in diameter. The hexamers pack into a two-dimensional array (PubMed:23144756). May interact with EutQ (By similarity).</text>
</comment>
<comment type="subcellular location">
    <subcellularLocation>
        <location evidence="7">Bacterial microcompartment</location>
    </subcellularLocation>
</comment>
<comment type="similarity">
    <text evidence="2">Belongs to the bacterial microcompartments protein family.</text>
</comment>
<sequence length="95" mass="9488">MASANALGMIETKGLVGAIEAADAMVKAANVQLVGKEQVGGGLVTVMVRGDVGAVKAATDAGAAAAERVGELISVHVIPRPHFEVDAILPKVSAE</sequence>
<organism>
    <name type="scientific">Clostridioides difficile (strain 630)</name>
    <name type="common">Peptoclostridium difficile</name>
    <dbReference type="NCBI Taxonomy" id="272563"/>
    <lineage>
        <taxon>Bacteria</taxon>
        <taxon>Bacillati</taxon>
        <taxon>Bacillota</taxon>
        <taxon>Clostridia</taxon>
        <taxon>Peptostreptococcales</taxon>
        <taxon>Peptostreptococcaceae</taxon>
        <taxon>Clostridioides</taxon>
    </lineage>
</organism>
<feature type="chain" id="PRO_0000452912" description="Bacterial microcompartment shell protein EutM">
    <location>
        <begin position="1"/>
        <end position="95"/>
    </location>
</feature>
<feature type="domain" description="BMC" evidence="2">
    <location>
        <begin position="6"/>
        <end position="90"/>
    </location>
</feature>
<feature type="strand" evidence="9">
    <location>
        <begin position="6"/>
        <end position="14"/>
    </location>
</feature>
<feature type="helix" evidence="9">
    <location>
        <begin position="15"/>
        <end position="28"/>
    </location>
</feature>
<feature type="strand" evidence="9">
    <location>
        <begin position="32"/>
        <end position="38"/>
    </location>
</feature>
<feature type="strand" evidence="9">
    <location>
        <begin position="43"/>
        <end position="50"/>
    </location>
</feature>
<feature type="helix" evidence="9">
    <location>
        <begin position="52"/>
        <end position="69"/>
    </location>
</feature>
<feature type="strand" evidence="9">
    <location>
        <begin position="70"/>
        <end position="80"/>
    </location>
</feature>
<feature type="helix" evidence="9">
    <location>
        <begin position="85"/>
        <end position="88"/>
    </location>
</feature>
<accession>Q187N0</accession>
<name>EUTM_CLOD6</name>
<reference key="1">
    <citation type="journal article" date="2006" name="Nat. Genet.">
        <title>The multidrug-resistant human pathogen Clostridium difficile has a highly mobile, mosaic genome.</title>
        <authorList>
            <person name="Sebaihia M."/>
            <person name="Wren B.W."/>
            <person name="Mullany P."/>
            <person name="Fairweather N.F."/>
            <person name="Minton N."/>
            <person name="Stabler R."/>
            <person name="Thomson N.R."/>
            <person name="Roberts A.P."/>
            <person name="Cerdeno-Tarraga A.M."/>
            <person name="Wang H."/>
            <person name="Holden M.T.G."/>
            <person name="Wright A."/>
            <person name="Churcher C."/>
            <person name="Quail M.A."/>
            <person name="Baker S."/>
            <person name="Bason N."/>
            <person name="Brooks K."/>
            <person name="Chillingworth T."/>
            <person name="Cronin A."/>
            <person name="Davis P."/>
            <person name="Dowd L."/>
            <person name="Fraser A."/>
            <person name="Feltwell T."/>
            <person name="Hance Z."/>
            <person name="Holroyd S."/>
            <person name="Jagels K."/>
            <person name="Moule S."/>
            <person name="Mungall K."/>
            <person name="Price C."/>
            <person name="Rabbinowitsch E."/>
            <person name="Sharp S."/>
            <person name="Simmonds M."/>
            <person name="Stevens K."/>
            <person name="Unwin L."/>
            <person name="Whithead S."/>
            <person name="Dupuy B."/>
            <person name="Dougan G."/>
            <person name="Barrell B."/>
            <person name="Parkhill J."/>
        </authorList>
    </citation>
    <scope>NUCLEOTIDE SEQUENCE [LARGE SCALE GENOMIC DNA]</scope>
    <source>
        <strain>630</strain>
    </source>
</reference>
<reference evidence="8" key="2">
    <citation type="journal article" date="2012" name="PLoS ONE">
        <title>Structural insight into the Clostridium difficile ethanolamine utilisation microcompartment.</title>
        <authorList>
            <person name="Pitts A.C."/>
            <person name="Tuck L.R."/>
            <person name="Faulds-Pain A."/>
            <person name="Lewis R.J."/>
            <person name="Marles-Wright J."/>
        </authorList>
    </citation>
    <scope>X-RAY CRYSTALLOGRAPHY (1.62 ANGSTROMS) OF 2-95</scope>
    <scope>FUNCTION</scope>
    <scope>SUBUNIT</scope>
    <scope>PROBABLE SUBCELLULAR LOCATION</scope>
    <source>
        <strain>630</strain>
    </source>
</reference>
<evidence type="ECO:0000250" key="1">
    <source>
        <dbReference type="UniProtKB" id="P41791"/>
    </source>
</evidence>
<evidence type="ECO:0000255" key="2">
    <source>
        <dbReference type="PROSITE-ProRule" id="PRU01278"/>
    </source>
</evidence>
<evidence type="ECO:0000269" key="3">
    <source>
    </source>
</evidence>
<evidence type="ECO:0000303" key="4">
    <source>
    </source>
</evidence>
<evidence type="ECO:0000303" key="5">
    <source>
    </source>
</evidence>
<evidence type="ECO:0000305" key="6"/>
<evidence type="ECO:0000305" key="7">
    <source>
    </source>
</evidence>
<evidence type="ECO:0007744" key="8">
    <source>
        <dbReference type="PDB" id="4AXJ"/>
    </source>
</evidence>
<evidence type="ECO:0007829" key="9">
    <source>
        <dbReference type="PDB" id="4AXJ"/>
    </source>
</evidence>
<dbReference type="EMBL" id="AM180355">
    <property type="protein sequence ID" value="CAJ68794.1"/>
    <property type="molecule type" value="Genomic_DNA"/>
</dbReference>
<dbReference type="RefSeq" id="WP_003423991.1">
    <property type="nucleotide sequence ID" value="NZ_JAUPES010000023.1"/>
</dbReference>
<dbReference type="RefSeq" id="YP_001088425.1">
    <property type="nucleotide sequence ID" value="NC_009089.1"/>
</dbReference>
<dbReference type="PDB" id="4AXJ">
    <property type="method" value="X-ray"/>
    <property type="resolution" value="1.62 A"/>
    <property type="chains" value="A/B/C=2-95"/>
</dbReference>
<dbReference type="PDBsum" id="4AXJ"/>
<dbReference type="SMR" id="Q187N0"/>
<dbReference type="STRING" id="272563.CD630_19180"/>
<dbReference type="EnsemblBacteria" id="CAJ68794">
    <property type="protein sequence ID" value="CAJ68794"/>
    <property type="gene ID" value="CD630_19180"/>
</dbReference>
<dbReference type="GeneID" id="66354299"/>
<dbReference type="KEGG" id="cdf:CD630_19180"/>
<dbReference type="KEGG" id="pdc:CDIF630_02122"/>
<dbReference type="PATRIC" id="fig|272563.120.peg.2014"/>
<dbReference type="eggNOG" id="COG4577">
    <property type="taxonomic scope" value="Bacteria"/>
</dbReference>
<dbReference type="OrthoDB" id="9812608at2"/>
<dbReference type="PhylomeDB" id="Q187N0"/>
<dbReference type="BioCyc" id="PDIF272563:G12WB-2062-MONOMER"/>
<dbReference type="UniPathway" id="UPA00560"/>
<dbReference type="EvolutionaryTrace" id="Q187N0"/>
<dbReference type="Proteomes" id="UP000001978">
    <property type="component" value="Chromosome"/>
</dbReference>
<dbReference type="GO" id="GO:0031469">
    <property type="term" value="C:bacterial microcompartment"/>
    <property type="evidence" value="ECO:0007669"/>
    <property type="project" value="UniProtKB-SubCell"/>
</dbReference>
<dbReference type="GO" id="GO:0046336">
    <property type="term" value="P:ethanolamine catabolic process"/>
    <property type="evidence" value="ECO:0007669"/>
    <property type="project" value="UniProtKB-UniPathway"/>
</dbReference>
<dbReference type="CDD" id="cd07059">
    <property type="entry name" value="BMC_PduA"/>
    <property type="match status" value="1"/>
</dbReference>
<dbReference type="Gene3D" id="3.30.70.1710">
    <property type="match status" value="1"/>
</dbReference>
<dbReference type="InterPro" id="IPR020808">
    <property type="entry name" value="Bact_microcomp_CS"/>
</dbReference>
<dbReference type="InterPro" id="IPR000249">
    <property type="entry name" value="BMC_dom"/>
</dbReference>
<dbReference type="InterPro" id="IPR050575">
    <property type="entry name" value="BMC_shell"/>
</dbReference>
<dbReference type="InterPro" id="IPR037233">
    <property type="entry name" value="CcmK-like_sf"/>
</dbReference>
<dbReference type="InterPro" id="IPR044872">
    <property type="entry name" value="CcmK/CsoS1_BMC"/>
</dbReference>
<dbReference type="NCBIfam" id="NF012018">
    <property type="entry name" value="PRK15474.1"/>
    <property type="match status" value="1"/>
</dbReference>
<dbReference type="PANTHER" id="PTHR33941:SF11">
    <property type="entry name" value="BACTERIAL MICROCOMPARTMENT SHELL PROTEIN PDUJ"/>
    <property type="match status" value="1"/>
</dbReference>
<dbReference type="PANTHER" id="PTHR33941">
    <property type="entry name" value="PROPANEDIOL UTILIZATION PROTEIN PDUA"/>
    <property type="match status" value="1"/>
</dbReference>
<dbReference type="Pfam" id="PF00936">
    <property type="entry name" value="BMC"/>
    <property type="match status" value="1"/>
</dbReference>
<dbReference type="SMART" id="SM00877">
    <property type="entry name" value="BMC"/>
    <property type="match status" value="1"/>
</dbReference>
<dbReference type="SUPFAM" id="SSF143414">
    <property type="entry name" value="CcmK-like"/>
    <property type="match status" value="1"/>
</dbReference>
<dbReference type="PROSITE" id="PS01139">
    <property type="entry name" value="BMC_1"/>
    <property type="match status" value="1"/>
</dbReference>
<dbReference type="PROSITE" id="PS51930">
    <property type="entry name" value="BMC_2"/>
    <property type="match status" value="1"/>
</dbReference>
<gene>
    <name evidence="5" type="primary">eutM</name>
    <name type="synonym">CD1918</name>
    <name evidence="4" type="synonym">eutK</name>
    <name type="ordered locus">CD630_19180</name>
</gene>